<comment type="function">
    <text evidence="1">Cell wall formation. Catalyzes the addition of glutamate to the nucleotide precursor UDP-N-acetylmuramoyl-L-alanine (UMA).</text>
</comment>
<comment type="catalytic activity">
    <reaction evidence="1">
        <text>UDP-N-acetyl-alpha-D-muramoyl-L-alanine + D-glutamate + ATP = UDP-N-acetyl-alpha-D-muramoyl-L-alanyl-D-glutamate + ADP + phosphate + H(+)</text>
        <dbReference type="Rhea" id="RHEA:16429"/>
        <dbReference type="ChEBI" id="CHEBI:15378"/>
        <dbReference type="ChEBI" id="CHEBI:29986"/>
        <dbReference type="ChEBI" id="CHEBI:30616"/>
        <dbReference type="ChEBI" id="CHEBI:43474"/>
        <dbReference type="ChEBI" id="CHEBI:83898"/>
        <dbReference type="ChEBI" id="CHEBI:83900"/>
        <dbReference type="ChEBI" id="CHEBI:456216"/>
        <dbReference type="EC" id="6.3.2.9"/>
    </reaction>
</comment>
<comment type="pathway">
    <text evidence="1">Cell wall biogenesis; peptidoglycan biosynthesis.</text>
</comment>
<comment type="subcellular location">
    <subcellularLocation>
        <location evidence="1">Cytoplasm</location>
    </subcellularLocation>
</comment>
<comment type="similarity">
    <text evidence="1">Belongs to the MurCDEF family.</text>
</comment>
<protein>
    <recommendedName>
        <fullName evidence="1">UDP-N-acetylmuramoylalanine--D-glutamate ligase</fullName>
        <ecNumber evidence="1">6.3.2.9</ecNumber>
    </recommendedName>
    <alternativeName>
        <fullName evidence="1">D-glutamic acid-adding enzyme</fullName>
    </alternativeName>
    <alternativeName>
        <fullName evidence="1">UDP-N-acetylmuramoyl-L-alanyl-D-glutamate synthetase</fullName>
    </alternativeName>
</protein>
<accession>Q04ES9</accession>
<dbReference type="EC" id="6.3.2.9" evidence="1"/>
<dbReference type="EMBL" id="CP000411">
    <property type="protein sequence ID" value="ABJ57043.1"/>
    <property type="molecule type" value="Genomic_DNA"/>
</dbReference>
<dbReference type="RefSeq" id="WP_011677632.1">
    <property type="nucleotide sequence ID" value="NC_008528.1"/>
</dbReference>
<dbReference type="SMR" id="Q04ES9"/>
<dbReference type="STRING" id="203123.OEOE_1147"/>
<dbReference type="KEGG" id="ooe:OEOE_1147"/>
<dbReference type="PATRIC" id="fig|203123.7.peg.1172"/>
<dbReference type="eggNOG" id="COG0771">
    <property type="taxonomic scope" value="Bacteria"/>
</dbReference>
<dbReference type="HOGENOM" id="CLU_032540_0_1_9"/>
<dbReference type="UniPathway" id="UPA00219"/>
<dbReference type="Proteomes" id="UP000000774">
    <property type="component" value="Chromosome"/>
</dbReference>
<dbReference type="GO" id="GO:0005737">
    <property type="term" value="C:cytoplasm"/>
    <property type="evidence" value="ECO:0007669"/>
    <property type="project" value="UniProtKB-SubCell"/>
</dbReference>
<dbReference type="GO" id="GO:0005524">
    <property type="term" value="F:ATP binding"/>
    <property type="evidence" value="ECO:0007669"/>
    <property type="project" value="UniProtKB-UniRule"/>
</dbReference>
<dbReference type="GO" id="GO:0008764">
    <property type="term" value="F:UDP-N-acetylmuramoylalanine-D-glutamate ligase activity"/>
    <property type="evidence" value="ECO:0007669"/>
    <property type="project" value="UniProtKB-UniRule"/>
</dbReference>
<dbReference type="GO" id="GO:0051301">
    <property type="term" value="P:cell division"/>
    <property type="evidence" value="ECO:0007669"/>
    <property type="project" value="UniProtKB-KW"/>
</dbReference>
<dbReference type="GO" id="GO:0071555">
    <property type="term" value="P:cell wall organization"/>
    <property type="evidence" value="ECO:0007669"/>
    <property type="project" value="UniProtKB-KW"/>
</dbReference>
<dbReference type="GO" id="GO:0009252">
    <property type="term" value="P:peptidoglycan biosynthetic process"/>
    <property type="evidence" value="ECO:0007669"/>
    <property type="project" value="UniProtKB-UniRule"/>
</dbReference>
<dbReference type="GO" id="GO:0008360">
    <property type="term" value="P:regulation of cell shape"/>
    <property type="evidence" value="ECO:0007669"/>
    <property type="project" value="UniProtKB-KW"/>
</dbReference>
<dbReference type="Gene3D" id="3.90.190.20">
    <property type="entry name" value="Mur ligase, C-terminal domain"/>
    <property type="match status" value="1"/>
</dbReference>
<dbReference type="Gene3D" id="3.40.1190.10">
    <property type="entry name" value="Mur-like, catalytic domain"/>
    <property type="match status" value="1"/>
</dbReference>
<dbReference type="Gene3D" id="3.40.50.720">
    <property type="entry name" value="NAD(P)-binding Rossmann-like Domain"/>
    <property type="match status" value="1"/>
</dbReference>
<dbReference type="HAMAP" id="MF_00639">
    <property type="entry name" value="MurD"/>
    <property type="match status" value="1"/>
</dbReference>
<dbReference type="InterPro" id="IPR036565">
    <property type="entry name" value="Mur-like_cat_sf"/>
</dbReference>
<dbReference type="InterPro" id="IPR004101">
    <property type="entry name" value="Mur_ligase_C"/>
</dbReference>
<dbReference type="InterPro" id="IPR036615">
    <property type="entry name" value="Mur_ligase_C_dom_sf"/>
</dbReference>
<dbReference type="InterPro" id="IPR013221">
    <property type="entry name" value="Mur_ligase_cen"/>
</dbReference>
<dbReference type="InterPro" id="IPR005762">
    <property type="entry name" value="MurD"/>
</dbReference>
<dbReference type="NCBIfam" id="TIGR01087">
    <property type="entry name" value="murD"/>
    <property type="match status" value="1"/>
</dbReference>
<dbReference type="PANTHER" id="PTHR43692">
    <property type="entry name" value="UDP-N-ACETYLMURAMOYLALANINE--D-GLUTAMATE LIGASE"/>
    <property type="match status" value="1"/>
</dbReference>
<dbReference type="PANTHER" id="PTHR43692:SF1">
    <property type="entry name" value="UDP-N-ACETYLMURAMOYLALANINE--D-GLUTAMATE LIGASE"/>
    <property type="match status" value="1"/>
</dbReference>
<dbReference type="Pfam" id="PF02875">
    <property type="entry name" value="Mur_ligase_C"/>
    <property type="match status" value="1"/>
</dbReference>
<dbReference type="Pfam" id="PF08245">
    <property type="entry name" value="Mur_ligase_M"/>
    <property type="match status" value="1"/>
</dbReference>
<dbReference type="SUPFAM" id="SSF51984">
    <property type="entry name" value="MurCD N-terminal domain"/>
    <property type="match status" value="1"/>
</dbReference>
<dbReference type="SUPFAM" id="SSF53623">
    <property type="entry name" value="MurD-like peptide ligases, catalytic domain"/>
    <property type="match status" value="1"/>
</dbReference>
<dbReference type="SUPFAM" id="SSF53244">
    <property type="entry name" value="MurD-like peptide ligases, peptide-binding domain"/>
    <property type="match status" value="1"/>
</dbReference>
<sequence length="438" mass="48649">MDQMNYQNKKVLVYGWARSGKAVYQLLKKIGANVYVTADEEPTDLFDDVNFVDDIDESFDLLVKNPGIRYEKEIIKKALNLNIPVITEVQVALDQFKGEVLAVTGSNGKTTTTTLIGKMLKADNVDVKVGGNIGIPVSELMLSDSQPRVLMLELSSFQLLGAQNIKPKIAVITNLFSSHIDFHHTRGNYLRAKFSITQHQTKDDYLVLNDSSIDSKDFAKRSQADDYYFSPTNTSVNTYVNDGTIYFDDEKIIDLSKVVLVGEHNLENILAAVTAAKIFGVSNRAIEKVLTSFKGLEHRLEAVGVIKERTVYNDSKATDIEATQKALASFKEPINLIAGGLDRGDDLNRLVPNFKNVVSLITYGQTKNKLQSAGEKAGIKQTVVVDTLKEAVAKAKELSRPGQVLLFSPAAASWDQFPNFEIRGEEFKKMIKNREGWS</sequence>
<reference key="1">
    <citation type="journal article" date="2006" name="Proc. Natl. Acad. Sci. U.S.A.">
        <title>Comparative genomics of the lactic acid bacteria.</title>
        <authorList>
            <person name="Makarova K.S."/>
            <person name="Slesarev A."/>
            <person name="Wolf Y.I."/>
            <person name="Sorokin A."/>
            <person name="Mirkin B."/>
            <person name="Koonin E.V."/>
            <person name="Pavlov A."/>
            <person name="Pavlova N."/>
            <person name="Karamychev V."/>
            <person name="Polouchine N."/>
            <person name="Shakhova V."/>
            <person name="Grigoriev I."/>
            <person name="Lou Y."/>
            <person name="Rohksar D."/>
            <person name="Lucas S."/>
            <person name="Huang K."/>
            <person name="Goodstein D.M."/>
            <person name="Hawkins T."/>
            <person name="Plengvidhya V."/>
            <person name="Welker D."/>
            <person name="Hughes J."/>
            <person name="Goh Y."/>
            <person name="Benson A."/>
            <person name="Baldwin K."/>
            <person name="Lee J.-H."/>
            <person name="Diaz-Muniz I."/>
            <person name="Dosti B."/>
            <person name="Smeianov V."/>
            <person name="Wechter W."/>
            <person name="Barabote R."/>
            <person name="Lorca G."/>
            <person name="Altermann E."/>
            <person name="Barrangou R."/>
            <person name="Ganesan B."/>
            <person name="Xie Y."/>
            <person name="Rawsthorne H."/>
            <person name="Tamir D."/>
            <person name="Parker C."/>
            <person name="Breidt F."/>
            <person name="Broadbent J.R."/>
            <person name="Hutkins R."/>
            <person name="O'Sullivan D."/>
            <person name="Steele J."/>
            <person name="Unlu G."/>
            <person name="Saier M.H. Jr."/>
            <person name="Klaenhammer T."/>
            <person name="Richardson P."/>
            <person name="Kozyavkin S."/>
            <person name="Weimer B.C."/>
            <person name="Mills D.A."/>
        </authorList>
    </citation>
    <scope>NUCLEOTIDE SEQUENCE [LARGE SCALE GENOMIC DNA]</scope>
    <source>
        <strain>ATCC BAA-331 / PSU-1</strain>
    </source>
</reference>
<evidence type="ECO:0000255" key="1">
    <source>
        <dbReference type="HAMAP-Rule" id="MF_00639"/>
    </source>
</evidence>
<feature type="chain" id="PRO_1000130868" description="UDP-N-acetylmuramoylalanine--D-glutamate ligase">
    <location>
        <begin position="1"/>
        <end position="438"/>
    </location>
</feature>
<feature type="binding site" evidence="1">
    <location>
        <begin position="105"/>
        <end position="111"/>
    </location>
    <ligand>
        <name>ATP</name>
        <dbReference type="ChEBI" id="CHEBI:30616"/>
    </ligand>
</feature>
<organism>
    <name type="scientific">Oenococcus oeni (strain ATCC BAA-331 / PSU-1)</name>
    <dbReference type="NCBI Taxonomy" id="203123"/>
    <lineage>
        <taxon>Bacteria</taxon>
        <taxon>Bacillati</taxon>
        <taxon>Bacillota</taxon>
        <taxon>Bacilli</taxon>
        <taxon>Lactobacillales</taxon>
        <taxon>Lactobacillaceae</taxon>
        <taxon>Oenococcus</taxon>
    </lineage>
</organism>
<name>MURD_OENOB</name>
<keyword id="KW-0067">ATP-binding</keyword>
<keyword id="KW-0131">Cell cycle</keyword>
<keyword id="KW-0132">Cell division</keyword>
<keyword id="KW-0133">Cell shape</keyword>
<keyword id="KW-0961">Cell wall biogenesis/degradation</keyword>
<keyword id="KW-0963">Cytoplasm</keyword>
<keyword id="KW-0436">Ligase</keyword>
<keyword id="KW-0547">Nucleotide-binding</keyword>
<keyword id="KW-0573">Peptidoglycan synthesis</keyword>
<keyword id="KW-1185">Reference proteome</keyword>
<proteinExistence type="inferred from homology"/>
<gene>
    <name evidence="1" type="primary">murD</name>
    <name type="ordered locus">OEOE_1147</name>
</gene>